<evidence type="ECO:0000250" key="1">
    <source>
        <dbReference type="UniProtKB" id="Q9BV81"/>
    </source>
</evidence>
<evidence type="ECO:0000305" key="2"/>
<reference key="1">
    <citation type="submission" date="2006-06" db="EMBL/GenBank/DDBJ databases">
        <authorList>
            <consortium name="Sanger Xenopus tropicalis EST/cDNA project"/>
        </authorList>
    </citation>
    <scope>NUCLEOTIDE SEQUENCE [LARGE SCALE MRNA]</scope>
    <source>
        <tissue>Egg</tissue>
    </source>
</reference>
<reference key="2">
    <citation type="submission" date="2004-06" db="EMBL/GenBank/DDBJ databases">
        <authorList>
            <consortium name="NIH - Xenopus Gene Collection (XGC) project"/>
        </authorList>
    </citation>
    <scope>NUCLEOTIDE SEQUENCE [LARGE SCALE MRNA]</scope>
    <source>
        <tissue>Embryo</tissue>
    </source>
</reference>
<dbReference type="EMBL" id="CR761331">
    <property type="protein sequence ID" value="CAJ81430.1"/>
    <property type="molecule type" value="mRNA"/>
</dbReference>
<dbReference type="EMBL" id="BC074574">
    <property type="protein sequence ID" value="AAH74574.1"/>
    <property type="molecule type" value="mRNA"/>
</dbReference>
<dbReference type="RefSeq" id="NP_001004809.1">
    <property type="nucleotide sequence ID" value="NM_001004809.1"/>
</dbReference>
<dbReference type="SMR" id="Q6GLC5"/>
<dbReference type="FunCoup" id="Q6GLC5">
    <property type="interactions" value="1473"/>
</dbReference>
<dbReference type="STRING" id="8364.ENSXETP00000004974"/>
<dbReference type="PaxDb" id="8364-ENSXETP00000055079"/>
<dbReference type="DNASU" id="448052"/>
<dbReference type="GeneID" id="448052"/>
<dbReference type="KEGG" id="xtr:448052"/>
<dbReference type="AGR" id="Xenbase:XB-GENE-997905"/>
<dbReference type="CTD" id="83460"/>
<dbReference type="Xenbase" id="XB-GENE-997905">
    <property type="gene designation" value="emc6"/>
</dbReference>
<dbReference type="eggNOG" id="KOG4455">
    <property type="taxonomic scope" value="Eukaryota"/>
</dbReference>
<dbReference type="HOGENOM" id="CLU_110781_3_0_1"/>
<dbReference type="InParanoid" id="Q6GLC5"/>
<dbReference type="OMA" id="MKANFEW"/>
<dbReference type="OrthoDB" id="16510at2759"/>
<dbReference type="PhylomeDB" id="Q6GLC5"/>
<dbReference type="TreeFam" id="TF332611"/>
<dbReference type="Proteomes" id="UP000008143">
    <property type="component" value="Chromosome 2"/>
</dbReference>
<dbReference type="Bgee" id="ENSXETG00000026014">
    <property type="expression patterns" value="Expressed in egg cell and 14 other cell types or tissues"/>
</dbReference>
<dbReference type="GO" id="GO:0072546">
    <property type="term" value="C:EMC complex"/>
    <property type="evidence" value="ECO:0000250"/>
    <property type="project" value="UniProtKB"/>
</dbReference>
<dbReference type="GO" id="GO:0005789">
    <property type="term" value="C:endoplasmic reticulum membrane"/>
    <property type="evidence" value="ECO:0000250"/>
    <property type="project" value="UniProtKB"/>
</dbReference>
<dbReference type="GO" id="GO:0016020">
    <property type="term" value="C:membrane"/>
    <property type="evidence" value="ECO:0000250"/>
    <property type="project" value="UniProtKB"/>
</dbReference>
<dbReference type="GO" id="GO:0045050">
    <property type="term" value="P:protein insertion into ER membrane by stop-transfer membrane-anchor sequence"/>
    <property type="evidence" value="ECO:0000250"/>
    <property type="project" value="UniProtKB"/>
</dbReference>
<dbReference type="GO" id="GO:0071816">
    <property type="term" value="P:tail-anchored membrane protein insertion into ER membrane"/>
    <property type="evidence" value="ECO:0000250"/>
    <property type="project" value="UniProtKB"/>
</dbReference>
<dbReference type="InterPro" id="IPR008504">
    <property type="entry name" value="Emc6"/>
</dbReference>
<dbReference type="InterPro" id="IPR029008">
    <property type="entry name" value="EMC6-like"/>
</dbReference>
<dbReference type="PANTHER" id="PTHR20994">
    <property type="entry name" value="ER MEMBRANE PROTEIN COMPLEX SUBUNIT 6"/>
    <property type="match status" value="1"/>
</dbReference>
<dbReference type="PANTHER" id="PTHR20994:SF0">
    <property type="entry name" value="ER MEMBRANE PROTEIN COMPLEX SUBUNIT 6"/>
    <property type="match status" value="1"/>
</dbReference>
<dbReference type="Pfam" id="PF07019">
    <property type="entry name" value="EMC6"/>
    <property type="match status" value="1"/>
</dbReference>
<name>EMC6_XENTR</name>
<comment type="function">
    <text evidence="1">Part of the endoplasmic reticulum membrane protein complex (EMC) that enables the energy-independent insertion into endoplasmic reticulum membranes of newly synthesized membrane proteins. Preferentially accommodates proteins with transmembrane domains that are weakly hydrophobic or contain destabilizing features such as charged and aromatic residues. Involved in the cotranslational insertion of multi-pass membrane proteins in which stop-transfer membrane-anchor sequences become ER membrane spanning helices. It is also required for the post-translational insertion of tail-anchored/TA proteins in endoplasmic reticulum membranes. By mediating the proper cotranslational insertion of N-terminal transmembrane domains in an N-exo topology, with translocated N-terminus in the lumen of the ER, controls the topology of multi-pass membrane proteins like the G protein-coupled receptors. By regulating the insertion of various proteins in membranes, it is indirectly involved in many cellular processes.</text>
</comment>
<comment type="subunit">
    <text evidence="1">Component of the ER membrane protein complex (EMC).</text>
</comment>
<comment type="subcellular location">
    <subcellularLocation>
        <location evidence="1">Endoplasmic reticulum membrane</location>
        <topology evidence="1">Multi-pass membrane protein</topology>
    </subcellularLocation>
</comment>
<comment type="similarity">
    <text evidence="2">Belongs to the EMC6 family.</text>
</comment>
<feature type="chain" id="PRO_0000254160" description="ER membrane protein complex subunit 6">
    <location>
        <begin position="1"/>
        <end position="110"/>
    </location>
</feature>
<feature type="topological domain" description="Cytoplasmic" evidence="1">
    <location>
        <begin position="1"/>
        <end position="28"/>
    </location>
</feature>
<feature type="transmembrane region" description="Helical" evidence="1">
    <location>
        <begin position="29"/>
        <end position="44"/>
    </location>
</feature>
<feature type="topological domain" description="Lumenal" evidence="1">
    <location>
        <begin position="45"/>
        <end position="50"/>
    </location>
</feature>
<feature type="transmembrane region" description="Helical" evidence="1">
    <location>
        <begin position="51"/>
        <end position="71"/>
    </location>
</feature>
<feature type="topological domain" description="Cytoplasmic" evidence="1">
    <location>
        <begin position="72"/>
        <end position="89"/>
    </location>
</feature>
<feature type="transmembrane region" description="Helical" evidence="1">
    <location>
        <begin position="90"/>
        <end position="106"/>
    </location>
</feature>
<feature type="topological domain" description="Lumenal" evidence="1">
    <location>
        <begin position="107"/>
        <end position="110"/>
    </location>
</feature>
<gene>
    <name type="primary">emc6</name>
    <name type="synonym">tmem93</name>
    <name type="ORF">TEgg053k02.1</name>
</gene>
<accession>Q6GLC5</accession>
<organism>
    <name type="scientific">Xenopus tropicalis</name>
    <name type="common">Western clawed frog</name>
    <name type="synonym">Silurana tropicalis</name>
    <dbReference type="NCBI Taxonomy" id="8364"/>
    <lineage>
        <taxon>Eukaryota</taxon>
        <taxon>Metazoa</taxon>
        <taxon>Chordata</taxon>
        <taxon>Craniata</taxon>
        <taxon>Vertebrata</taxon>
        <taxon>Euteleostomi</taxon>
        <taxon>Amphibia</taxon>
        <taxon>Batrachia</taxon>
        <taxon>Anura</taxon>
        <taxon>Pipoidea</taxon>
        <taxon>Pipidae</taxon>
        <taxon>Xenopodinae</taxon>
        <taxon>Xenopus</taxon>
        <taxon>Silurana</taxon>
    </lineage>
</organism>
<sequence length="110" mass="12090">MAGVALKREGPQFISEAAVRGNAAVLDYCRTSVSALSGATAGILGLTALYGFIFYFLASFLLSLLLVLKSGRKWNKYFKSRKPLFTGGLIGGLFTYVLFWTFLYGMVHVY</sequence>
<protein>
    <recommendedName>
        <fullName>ER membrane protein complex subunit 6</fullName>
    </recommendedName>
    <alternativeName>
        <fullName>Transmembrane protein 93</fullName>
    </alternativeName>
</protein>
<proteinExistence type="inferred from homology"/>
<keyword id="KW-0256">Endoplasmic reticulum</keyword>
<keyword id="KW-0472">Membrane</keyword>
<keyword id="KW-1185">Reference proteome</keyword>
<keyword id="KW-0812">Transmembrane</keyword>
<keyword id="KW-1133">Transmembrane helix</keyword>